<feature type="chain" id="PRO_0000170361" description="Nucleoid-associated protein alr5067">
    <location>
        <begin position="1"/>
        <end position="115"/>
    </location>
</feature>
<gene>
    <name type="ordered locus">alr5067</name>
</gene>
<organism>
    <name type="scientific">Nostoc sp. (strain PCC 7120 / SAG 25.82 / UTEX 2576)</name>
    <dbReference type="NCBI Taxonomy" id="103690"/>
    <lineage>
        <taxon>Bacteria</taxon>
        <taxon>Bacillati</taxon>
        <taxon>Cyanobacteriota</taxon>
        <taxon>Cyanophyceae</taxon>
        <taxon>Nostocales</taxon>
        <taxon>Nostocaceae</taxon>
        <taxon>Nostoc</taxon>
    </lineage>
</organism>
<accession>Q8YM73</accession>
<name>Y5067_NOSS1</name>
<keyword id="KW-0963">Cytoplasm</keyword>
<keyword id="KW-0238">DNA-binding</keyword>
<keyword id="KW-1185">Reference proteome</keyword>
<proteinExistence type="inferred from homology"/>
<comment type="function">
    <text evidence="1">Binds to DNA and alters its conformation. May be involved in regulation of gene expression, nucleoid organization and DNA protection.</text>
</comment>
<comment type="subunit">
    <text evidence="1">Homodimer.</text>
</comment>
<comment type="subcellular location">
    <subcellularLocation>
        <location evidence="1">Cytoplasm</location>
        <location evidence="1">Nucleoid</location>
    </subcellularLocation>
</comment>
<comment type="similarity">
    <text evidence="1">Belongs to the YbaB/EbfC family.</text>
</comment>
<dbReference type="EMBL" id="BA000019">
    <property type="protein sequence ID" value="BAB76766.1"/>
    <property type="molecule type" value="Genomic_DNA"/>
</dbReference>
<dbReference type="PIR" id="AC2439">
    <property type="entry name" value="AC2439"/>
</dbReference>
<dbReference type="RefSeq" id="WP_010999193.1">
    <property type="nucleotide sequence ID" value="NZ_RSCN01000014.1"/>
</dbReference>
<dbReference type="SMR" id="Q8YM73"/>
<dbReference type="STRING" id="103690.gene:10497125"/>
<dbReference type="KEGG" id="ana:alr5067"/>
<dbReference type="eggNOG" id="COG0718">
    <property type="taxonomic scope" value="Bacteria"/>
</dbReference>
<dbReference type="OrthoDB" id="487780at2"/>
<dbReference type="Proteomes" id="UP000002483">
    <property type="component" value="Chromosome"/>
</dbReference>
<dbReference type="GO" id="GO:0043590">
    <property type="term" value="C:bacterial nucleoid"/>
    <property type="evidence" value="ECO:0007669"/>
    <property type="project" value="UniProtKB-UniRule"/>
</dbReference>
<dbReference type="GO" id="GO:0005829">
    <property type="term" value="C:cytosol"/>
    <property type="evidence" value="ECO:0007669"/>
    <property type="project" value="TreeGrafter"/>
</dbReference>
<dbReference type="GO" id="GO:0003677">
    <property type="term" value="F:DNA binding"/>
    <property type="evidence" value="ECO:0007669"/>
    <property type="project" value="UniProtKB-UniRule"/>
</dbReference>
<dbReference type="Gene3D" id="3.30.1310.10">
    <property type="entry name" value="Nucleoid-associated protein YbaB-like domain"/>
    <property type="match status" value="1"/>
</dbReference>
<dbReference type="HAMAP" id="MF_00274">
    <property type="entry name" value="DNA_YbaB_EbfC"/>
    <property type="match status" value="1"/>
</dbReference>
<dbReference type="InterPro" id="IPR036894">
    <property type="entry name" value="YbaB-like_sf"/>
</dbReference>
<dbReference type="InterPro" id="IPR004401">
    <property type="entry name" value="YbaB/EbfC"/>
</dbReference>
<dbReference type="NCBIfam" id="TIGR00103">
    <property type="entry name" value="DNA_YbaB_EbfC"/>
    <property type="match status" value="1"/>
</dbReference>
<dbReference type="PANTHER" id="PTHR33449">
    <property type="entry name" value="NUCLEOID-ASSOCIATED PROTEIN YBAB"/>
    <property type="match status" value="1"/>
</dbReference>
<dbReference type="PANTHER" id="PTHR33449:SF1">
    <property type="entry name" value="NUCLEOID-ASSOCIATED PROTEIN YBAB"/>
    <property type="match status" value="1"/>
</dbReference>
<dbReference type="Pfam" id="PF02575">
    <property type="entry name" value="YbaB_DNA_bd"/>
    <property type="match status" value="1"/>
</dbReference>
<dbReference type="PIRSF" id="PIRSF004555">
    <property type="entry name" value="UCP004555"/>
    <property type="match status" value="1"/>
</dbReference>
<dbReference type="SUPFAM" id="SSF82607">
    <property type="entry name" value="YbaB-like"/>
    <property type="match status" value="1"/>
</dbReference>
<evidence type="ECO:0000255" key="1">
    <source>
        <dbReference type="HAMAP-Rule" id="MF_00274"/>
    </source>
</evidence>
<reference key="1">
    <citation type="journal article" date="2001" name="DNA Res.">
        <title>Complete genomic sequence of the filamentous nitrogen-fixing cyanobacterium Anabaena sp. strain PCC 7120.</title>
        <authorList>
            <person name="Kaneko T."/>
            <person name="Nakamura Y."/>
            <person name="Wolk C.P."/>
            <person name="Kuritz T."/>
            <person name="Sasamoto S."/>
            <person name="Watanabe A."/>
            <person name="Iriguchi M."/>
            <person name="Ishikawa A."/>
            <person name="Kawashima K."/>
            <person name="Kimura T."/>
            <person name="Kishida Y."/>
            <person name="Kohara M."/>
            <person name="Matsumoto M."/>
            <person name="Matsuno A."/>
            <person name="Muraki A."/>
            <person name="Nakazaki N."/>
            <person name="Shimpo S."/>
            <person name="Sugimoto M."/>
            <person name="Takazawa M."/>
            <person name="Yamada M."/>
            <person name="Yasuda M."/>
            <person name="Tabata S."/>
        </authorList>
    </citation>
    <scope>NUCLEOTIDE SEQUENCE [LARGE SCALE GENOMIC DNA]</scope>
    <source>
        <strain>PCC 7120 / SAG 25.82 / UTEX 2576</strain>
    </source>
</reference>
<sequence>MTGKGQGFGFGLGKMKELAEAFKKAQQVQEGAKRLQEELEQMEIQGEAGGGLVKVIVSGNQEPKRVEISPDALAQGADLLSDLVTAAMKDAYIKSTATMRERMEDLTSGLELPGF</sequence>
<protein>
    <recommendedName>
        <fullName evidence="1">Nucleoid-associated protein alr5067</fullName>
    </recommendedName>
</protein>